<keyword id="KW-0025">Alternative splicing</keyword>
<keyword id="KW-1003">Cell membrane</keyword>
<keyword id="KW-0297">G-protein coupled receptor</keyword>
<keyword id="KW-0472">Membrane</keyword>
<keyword id="KW-0675">Receptor</keyword>
<keyword id="KW-1185">Reference proteome</keyword>
<keyword id="KW-0807">Transducer</keyword>
<keyword id="KW-0812">Transmembrane</keyword>
<keyword id="KW-1133">Transmembrane helix</keyword>
<dbReference type="EMBL" id="AY919614">
    <property type="protein sequence ID" value="AAY16563.1"/>
    <property type="status" value="ALT_SEQ"/>
    <property type="molecule type" value="mRNA"/>
</dbReference>
<dbReference type="EMBL" id="AY919615">
    <property type="protein sequence ID" value="AAY16564.1"/>
    <property type="molecule type" value="mRNA"/>
</dbReference>
<dbReference type="EMBL" id="BX284605">
    <property type="protein sequence ID" value="CCD68154.2"/>
    <property type="molecule type" value="Genomic_DNA"/>
</dbReference>
<dbReference type="EMBL" id="BX284605">
    <property type="protein sequence ID" value="CCD68155.1"/>
    <property type="molecule type" value="Genomic_DNA"/>
</dbReference>
<dbReference type="EMBL" id="BX284605">
    <property type="protein sequence ID" value="SOF58866.1"/>
    <property type="molecule type" value="Genomic_DNA"/>
</dbReference>
<dbReference type="RefSeq" id="NP_001343646.1">
    <molecule id="G5EEB1-2"/>
    <property type="nucleotide sequence ID" value="NM_001356671.3"/>
</dbReference>
<dbReference type="RefSeq" id="NP_001343861.1">
    <molecule id="G5EEB1-3"/>
    <property type="nucleotide sequence ID" value="NM_001356672.4"/>
</dbReference>
<dbReference type="RefSeq" id="NP_504746.1">
    <molecule id="G5EEB1-1"/>
    <property type="nucleotide sequence ID" value="NM_072345.7"/>
</dbReference>
<dbReference type="RefSeq" id="NP_504747.1">
    <property type="nucleotide sequence ID" value="NM_072346.3"/>
</dbReference>
<dbReference type="SMR" id="G5EEB1"/>
<dbReference type="FunCoup" id="G5EEB1">
    <property type="interactions" value="39"/>
</dbReference>
<dbReference type="STRING" id="6239.T19F4.1b.1"/>
<dbReference type="PaxDb" id="6239-T19F4.1b"/>
<dbReference type="EnsemblMetazoa" id="T19F4.1a.1">
    <molecule id="G5EEB1-2"/>
    <property type="protein sequence ID" value="T19F4.1a.1"/>
    <property type="gene ID" value="WBGene00020586"/>
</dbReference>
<dbReference type="EnsemblMetazoa" id="T19F4.1b.1">
    <molecule id="G5EEB1-1"/>
    <property type="protein sequence ID" value="T19F4.1b.1"/>
    <property type="gene ID" value="WBGene00020586"/>
</dbReference>
<dbReference type="EnsemblMetazoa" id="T19F4.1c.1">
    <molecule id="G5EEB1-3"/>
    <property type="protein sequence ID" value="T19F4.1c.1"/>
    <property type="gene ID" value="WBGene00020586"/>
</dbReference>
<dbReference type="GeneID" id="179076"/>
<dbReference type="KEGG" id="cel:CELE_T19F4.1"/>
<dbReference type="AGR" id="WB:WBGene00020586"/>
<dbReference type="CTD" id="179076"/>
<dbReference type="WormBase" id="T19F4.1a">
    <molecule id="G5EEB1-2"/>
    <property type="protein sequence ID" value="CE28679"/>
    <property type="gene ID" value="WBGene00020586"/>
    <property type="gene designation" value="frpr-18"/>
</dbReference>
<dbReference type="WormBase" id="T19F4.1b">
    <molecule id="G5EEB1-1"/>
    <property type="protein sequence ID" value="CE29349"/>
    <property type="gene ID" value="WBGene00020586"/>
    <property type="gene designation" value="frpr-18"/>
</dbReference>
<dbReference type="WormBase" id="T19F4.1c">
    <molecule id="G5EEB1-3"/>
    <property type="protein sequence ID" value="CE52203"/>
    <property type="gene ID" value="WBGene00020586"/>
    <property type="gene designation" value="frpr-18"/>
</dbReference>
<dbReference type="eggNOG" id="KOG3656">
    <property type="taxonomic scope" value="Eukaryota"/>
</dbReference>
<dbReference type="HOGENOM" id="CLU_009579_24_8_1"/>
<dbReference type="InParanoid" id="G5EEB1"/>
<dbReference type="OMA" id="MFPIGMI"/>
<dbReference type="OrthoDB" id="10011262at2759"/>
<dbReference type="PhylomeDB" id="G5EEB1"/>
<dbReference type="PRO" id="PR:G5EEB1"/>
<dbReference type="Proteomes" id="UP000001940">
    <property type="component" value="Chromosome V"/>
</dbReference>
<dbReference type="Bgee" id="WBGene00020586">
    <property type="expression patterns" value="Expressed in larva and 2 other cell types or tissues"/>
</dbReference>
<dbReference type="ExpressionAtlas" id="G5EEB1">
    <property type="expression patterns" value="baseline and differential"/>
</dbReference>
<dbReference type="GO" id="GO:0016020">
    <property type="term" value="C:membrane"/>
    <property type="evidence" value="ECO:0000318"/>
    <property type="project" value="GO_Central"/>
</dbReference>
<dbReference type="GO" id="GO:0005886">
    <property type="term" value="C:plasma membrane"/>
    <property type="evidence" value="ECO:0000315"/>
    <property type="project" value="UniProtKB"/>
</dbReference>
<dbReference type="GO" id="GO:0004930">
    <property type="term" value="F:G protein-coupled receptor activity"/>
    <property type="evidence" value="ECO:0000315"/>
    <property type="project" value="UniProtKB"/>
</dbReference>
<dbReference type="GO" id="GO:0007186">
    <property type="term" value="P:G protein-coupled receptor signaling pathway"/>
    <property type="evidence" value="ECO:0000315"/>
    <property type="project" value="UniProtKB"/>
</dbReference>
<dbReference type="GO" id="GO:0050714">
    <property type="term" value="P:positive regulation of protein secretion"/>
    <property type="evidence" value="ECO:0000316"/>
    <property type="project" value="UniProtKB"/>
</dbReference>
<dbReference type="GO" id="GO:0007165">
    <property type="term" value="P:signal transduction"/>
    <property type="evidence" value="ECO:0000315"/>
    <property type="project" value="UniProtKB"/>
</dbReference>
<dbReference type="GO" id="GO:0030431">
    <property type="term" value="P:sleep"/>
    <property type="evidence" value="ECO:0000316"/>
    <property type="project" value="UniProtKB"/>
</dbReference>
<dbReference type="CDD" id="cd14978">
    <property type="entry name" value="7tmA_FMRFamide_R-like"/>
    <property type="match status" value="1"/>
</dbReference>
<dbReference type="Gene3D" id="1.20.1070.10">
    <property type="entry name" value="Rhodopsin 7-helix transmembrane proteins"/>
    <property type="match status" value="1"/>
</dbReference>
<dbReference type="InterPro" id="IPR053352">
    <property type="entry name" value="FMRFamide_rcpt"/>
</dbReference>
<dbReference type="InterPro" id="IPR000276">
    <property type="entry name" value="GPCR_Rhodpsn"/>
</dbReference>
<dbReference type="InterPro" id="IPR017452">
    <property type="entry name" value="GPCR_Rhodpsn_7TM"/>
</dbReference>
<dbReference type="PANTHER" id="PTHR47323">
    <property type="entry name" value="FMRFAMIDE PEPTIDE RECEPTOR FAMILY-RELATED"/>
    <property type="match status" value="1"/>
</dbReference>
<dbReference type="PANTHER" id="PTHR47323:SF4">
    <property type="entry name" value="FMRFAMIDE PEPTIDE RECEPTOR FRPR-18"/>
    <property type="match status" value="1"/>
</dbReference>
<dbReference type="Pfam" id="PF00001">
    <property type="entry name" value="7tm_1"/>
    <property type="match status" value="1"/>
</dbReference>
<dbReference type="PRINTS" id="PR00237">
    <property type="entry name" value="GPCRRHODOPSN"/>
</dbReference>
<dbReference type="SUPFAM" id="SSF81321">
    <property type="entry name" value="Family A G protein-coupled receptor-like"/>
    <property type="match status" value="1"/>
</dbReference>
<dbReference type="PROSITE" id="PS00237">
    <property type="entry name" value="G_PROTEIN_RECEP_F1_1"/>
    <property type="match status" value="1"/>
</dbReference>
<dbReference type="PROSITE" id="PS50262">
    <property type="entry name" value="G_PROTEIN_RECEP_F1_2"/>
    <property type="match status" value="1"/>
</dbReference>
<reference evidence="8" key="1">
    <citation type="journal article" date="1998" name="Science">
        <title>Genome sequence of the nematode C. elegans: a platform for investigating biology.</title>
        <authorList>
            <consortium name="The C. elegans sequencing consortium"/>
        </authorList>
    </citation>
    <scope>NUCLEOTIDE SEQUENCE [LARGE SCALE GENOMIC DNA]</scope>
    <source>
        <strain evidence="8">Bristol N2</strain>
    </source>
</reference>
<reference evidence="7" key="2">
    <citation type="journal article" date="2005" name="Biochem. Biophys. Res. Commun.">
        <title>Molecular characterization of two G protein-coupled receptor splice variants as FLP2 receptors in Caenorhabditis elegans.</title>
        <authorList>
            <person name="Mertens I."/>
            <person name="Meeusen T."/>
            <person name="Janssen T."/>
            <person name="Nachman R."/>
            <person name="Schoofs L."/>
        </authorList>
    </citation>
    <scope>FUNCTION</scope>
</reference>
<reference evidence="7" key="3">
    <citation type="journal article" date="2013" name="Int. J. Parasitol. Drugs Drug Resist.">
        <title>Functional expression and characterization of the C. elegans G-protein-coupled FLP-2 Receptor (T19F4.1) in mammalian cells and yeast.</title>
        <authorList>
            <person name="Larsen M.J."/>
            <person name="Lancheros E.R."/>
            <person name="Williams T."/>
            <person name="Lowery D.E."/>
            <person name="Geary T.G."/>
            <person name="Kubiak T.M."/>
        </authorList>
    </citation>
    <scope>FUNCTION</scope>
</reference>
<reference evidence="7" key="4">
    <citation type="journal article" date="2016" name="Genetics">
        <title>The Neuropeptides FLP-2 and PDF-1 Act in Concert To Arouse Caenorhabditis elegans Locomotion.</title>
        <authorList>
            <person name="Chen D."/>
            <person name="Taylor K.P."/>
            <person name="Hall Q."/>
            <person name="Kaplan J.M."/>
        </authorList>
    </citation>
    <scope>FUNCTION</scope>
    <scope>TISSUE SPECIFICITY</scope>
    <scope>DISRUPTION PHENOTYPE</scope>
</reference>
<feature type="chain" id="PRO_0000454195" description="FMRFamide peptide receptor frpr-18">
    <location>
        <begin position="1"/>
        <end position="432"/>
    </location>
</feature>
<feature type="topological domain" description="Extracellular" evidence="7">
    <location>
        <begin position="1"/>
        <end position="8"/>
    </location>
</feature>
<feature type="transmembrane region" description="Helical; Name=1" evidence="1">
    <location>
        <begin position="9"/>
        <end position="29"/>
    </location>
</feature>
<feature type="topological domain" description="Cytoplasmic" evidence="7">
    <location>
        <begin position="30"/>
        <end position="42"/>
    </location>
</feature>
<feature type="transmembrane region" description="Helical; Name=2" evidence="1">
    <location>
        <begin position="43"/>
        <end position="63"/>
    </location>
</feature>
<feature type="topological domain" description="Extracellular" evidence="7">
    <location>
        <begin position="64"/>
        <end position="84"/>
    </location>
</feature>
<feature type="transmembrane region" description="Helical; Name=3" evidence="1">
    <location>
        <begin position="85"/>
        <end position="105"/>
    </location>
</feature>
<feature type="topological domain" description="Cytoplasmic" evidence="7">
    <location>
        <begin position="106"/>
        <end position="128"/>
    </location>
</feature>
<feature type="transmembrane region" description="Helical; Name=4" evidence="1">
    <location>
        <begin position="129"/>
        <end position="149"/>
    </location>
</feature>
<feature type="topological domain" description="Extracellular" evidence="7">
    <location>
        <begin position="150"/>
        <end position="176"/>
    </location>
</feature>
<feature type="transmembrane region" description="Helical; Name=5" evidence="1">
    <location>
        <begin position="177"/>
        <end position="197"/>
    </location>
</feature>
<feature type="topological domain" description="Cytoplasmic" evidence="7">
    <location>
        <begin position="198"/>
        <end position="225"/>
    </location>
</feature>
<feature type="transmembrane region" description="Helical; Name=6" evidence="1">
    <location>
        <begin position="226"/>
        <end position="246"/>
    </location>
</feature>
<feature type="topological domain" description="Extracellular" evidence="7">
    <location>
        <begin position="247"/>
        <end position="271"/>
    </location>
</feature>
<feature type="transmembrane region" description="Helical; Name=7" evidence="1">
    <location>
        <begin position="272"/>
        <end position="292"/>
    </location>
</feature>
<feature type="topological domain" description="Cytoplasmic" evidence="7">
    <location>
        <begin position="293"/>
        <end position="432"/>
    </location>
</feature>
<feature type="region of interest" description="Disordered" evidence="2">
    <location>
        <begin position="328"/>
        <end position="349"/>
    </location>
</feature>
<feature type="region of interest" description="Disordered" evidence="2">
    <location>
        <begin position="388"/>
        <end position="411"/>
    </location>
</feature>
<feature type="splice variant" id="VSP_061254" description="In isoform c." evidence="7">
    <location>
        <begin position="219"/>
        <end position="260"/>
    </location>
</feature>
<feature type="splice variant" id="VSP_061255" description="In isoform a." evidence="7">
    <original>SRSSDVLLKPIYMQKRSERFSSEYNERTCKHLAPFEEHKLPKLPSEKRKKKLHKMSAVEHRGM</original>
    <variation>RKPILNAHLSEPLIGRSSQTNLHAEKKRTLLVGVQRTNLQTPCSFRRAQITKIAEREEEEETT</variation>
    <location>
        <begin position="347"/>
        <end position="409"/>
    </location>
</feature>
<feature type="splice variant" id="VSP_061256" description="In isoform c." evidence="7">
    <original>RSSDVLLKPIYMQKRSERFSSEYNERTCKHLAPFEEHKLPKLPSEKRKKKLHKMSAVEHRGMPE</original>
    <variation>YRKPILNAHLSEPLIGRSSQTNLHAEKKRTLLVGVQRTNLQTPCSFRRAQITKIAEREEEEETT</variation>
    <location>
        <begin position="348"/>
        <end position="411"/>
    </location>
</feature>
<feature type="splice variant" id="VSP_061257" description="In isoform a." evidence="7">
    <location>
        <begin position="410"/>
        <end position="432"/>
    </location>
</feature>
<feature type="splice variant" id="VSP_061258" description="In isoform c." evidence="7">
    <location>
        <begin position="412"/>
        <end position="432"/>
    </location>
</feature>
<name>FPR18_CAEEL</name>
<gene>
    <name evidence="10" type="primary">frpr-18</name>
    <name evidence="10" type="ORF">T19F4.1</name>
</gene>
<accession>G5EEB1</accession>
<accession>A0A2C9C3N0</accession>
<accession>G5EGC5</accession>
<accession>Q29XY6</accession>
<evidence type="ECO:0000255" key="1"/>
<evidence type="ECO:0000256" key="2">
    <source>
        <dbReference type="SAM" id="MobiDB-lite"/>
    </source>
</evidence>
<evidence type="ECO:0000269" key="3">
    <source>
    </source>
</evidence>
<evidence type="ECO:0000269" key="4">
    <source>
    </source>
</evidence>
<evidence type="ECO:0000269" key="5">
    <source>
    </source>
</evidence>
<evidence type="ECO:0000303" key="6">
    <source>
    </source>
</evidence>
<evidence type="ECO:0000305" key="7"/>
<evidence type="ECO:0000312" key="8">
    <source>
        <dbReference type="Proteomes" id="UP000001940"/>
    </source>
</evidence>
<evidence type="ECO:0000312" key="9">
    <source>
        <dbReference type="WormBase" id="T19F4.1a"/>
    </source>
</evidence>
<evidence type="ECO:0000312" key="10">
    <source>
        <dbReference type="WormBase" id="T19F4.1b"/>
    </source>
</evidence>
<evidence type="ECO:0000312" key="11">
    <source>
        <dbReference type="WormBase" id="T19F4.1c"/>
    </source>
</evidence>
<comment type="function">
    <text evidence="3 4 5">G-protein coupled receptor for flp-2 neuropeptides (PubMed:15809090, PubMed:24533288). May act through the G(q) alpha type of G proteins (PubMed:15809090, PubMed:24533288). Involved in mediating arousal from the sleep-like state called lethargus, which occurs during molting between larval and adult stages, in part by regulating touch sensitivity, and working in concert with neuropeptide pdf-1 (PubMed:27585848).</text>
</comment>
<comment type="subcellular location">
    <subcellularLocation>
        <location evidence="1">Cell membrane</location>
        <topology evidence="1">Multi-pass membrane protein</topology>
    </subcellularLocation>
</comment>
<comment type="alternative products">
    <event type="alternative splicing"/>
    <isoform>
        <id>G5EEB1-1</id>
        <name evidence="10">b</name>
        <sequence type="displayed"/>
    </isoform>
    <isoform>
        <id>G5EEB1-2</id>
        <name evidence="9">a</name>
        <sequence type="described" ref="VSP_061255 VSP_061257"/>
    </isoform>
    <isoform>
        <id>G5EEB1-3</id>
        <name evidence="11">c</name>
        <sequence type="described" ref="VSP_061254 VSP_061256 VSP_061258"/>
    </isoform>
</comment>
<comment type="tissue specificity">
    <text evidence="5">Expressed in a subset of neurons in the head, midbody, and tail, including AIY, ASI, BAG, URA, CAN, I6, PVQ, DVA, RIM, and VC, and in the anal sphincter and intestinal muscles (PubMed:27585848). Expression from the ASI neurons is involved in promoting arousal (PubMed:27585848).</text>
</comment>
<comment type="disruption phenotype">
    <text evidence="5">Decreased locomotion velocity (PubMed:27585848). Restores normal quiescence during molting between larval and adult stages, in neuropeptide receptor npr-1 mutant background (PubMed:27585848).</text>
</comment>
<comment type="similarity">
    <text evidence="7">Belongs to the G-protein coupled receptor 1 family.</text>
</comment>
<comment type="sequence caution" evidence="7">
    <conflict type="erroneous gene model prediction">
        <sequence resource="EMBL-CDS" id="AAY16563"/>
    </conflict>
</comment>
<sequence>MESQQLMACAILVIVLVGIFGNSLSFILFSRPHMRSSSVNVLLCALSFFDFSLLTLSIPIFVIPNLDLWANDLSLSTYMAYILKLIYPINLMMQTCSVYIMVMITLERWVAVCRPLQVRVWCTPRKSRNAILVIIVSAFLYNFVRFFEYRFVVTESGALYEKWLRDPGKHRWYYVGYYTILYIVTHFLVPFSVMAFANGHVIVAMCKLSKTRQMLTRQQQREQSTTVMLLIVTFVFAICNTLPFLLNVSESIFPTLFQDESTRGLAYWLNDLSNLLVVLNSGTTFIIYFTFSEKYRQTLVFILKNGCCATVSDYNNYTAMSRTASMRISSETGGQIQRQGSKMSNSSRSSDVLLKPIYMQKRSERFSSEYNERTCKHLAPFEEHKLPKLPSEKRKKKLHKMSAVEHRGMPEITITFSEDLPDGEPDSPCQPC</sequence>
<organism evidence="8">
    <name type="scientific">Caenorhabditis elegans</name>
    <dbReference type="NCBI Taxonomy" id="6239"/>
    <lineage>
        <taxon>Eukaryota</taxon>
        <taxon>Metazoa</taxon>
        <taxon>Ecdysozoa</taxon>
        <taxon>Nematoda</taxon>
        <taxon>Chromadorea</taxon>
        <taxon>Rhabditida</taxon>
        <taxon>Rhabditina</taxon>
        <taxon>Rhabditomorpha</taxon>
        <taxon>Rhabditoidea</taxon>
        <taxon>Rhabditidae</taxon>
        <taxon>Peloderinae</taxon>
        <taxon>Caenorhabditis</taxon>
    </lineage>
</organism>
<protein>
    <recommendedName>
        <fullName evidence="10">FMRFamide peptide receptor frpr-18</fullName>
    </recommendedName>
    <alternativeName>
        <fullName evidence="6">FLP2 receptor</fullName>
    </alternativeName>
</protein>
<proteinExistence type="evidence at transcript level"/>